<evidence type="ECO:0000250" key="1"/>
<evidence type="ECO:0000255" key="2">
    <source>
        <dbReference type="HAMAP-Rule" id="MF_00403"/>
    </source>
</evidence>
<evidence type="ECO:0000305" key="3"/>
<accession>B0BQZ5</accession>
<gene>
    <name evidence="2" type="primary">rpsL</name>
    <name type="ordered locus">APJL_1426</name>
</gene>
<protein>
    <recommendedName>
        <fullName evidence="2">Small ribosomal subunit protein uS12</fullName>
    </recommendedName>
    <alternativeName>
        <fullName evidence="3">30S ribosomal protein S12</fullName>
    </alternativeName>
</protein>
<organism>
    <name type="scientific">Actinobacillus pleuropneumoniae serotype 3 (strain JL03)</name>
    <dbReference type="NCBI Taxonomy" id="434271"/>
    <lineage>
        <taxon>Bacteria</taxon>
        <taxon>Pseudomonadati</taxon>
        <taxon>Pseudomonadota</taxon>
        <taxon>Gammaproteobacteria</taxon>
        <taxon>Pasteurellales</taxon>
        <taxon>Pasteurellaceae</taxon>
        <taxon>Actinobacillus</taxon>
    </lineage>
</organism>
<keyword id="KW-0488">Methylation</keyword>
<keyword id="KW-0687">Ribonucleoprotein</keyword>
<keyword id="KW-0689">Ribosomal protein</keyword>
<keyword id="KW-0694">RNA-binding</keyword>
<keyword id="KW-0699">rRNA-binding</keyword>
<keyword id="KW-0820">tRNA-binding</keyword>
<comment type="function">
    <text evidence="2">With S4 and S5 plays an important role in translational accuracy.</text>
</comment>
<comment type="function">
    <text evidence="2">Interacts with and stabilizes bases of the 16S rRNA that are involved in tRNA selection in the A site and with the mRNA backbone. Located at the interface of the 30S and 50S subunits, it traverses the body of the 30S subunit contacting proteins on the other side and probably holding the rRNA structure together. The combined cluster of proteins S8, S12 and S17 appears to hold together the shoulder and platform of the 30S subunit.</text>
</comment>
<comment type="subunit">
    <text evidence="2">Part of the 30S ribosomal subunit. Contacts proteins S8 and S17. May interact with IF1 in the 30S initiation complex.</text>
</comment>
<comment type="similarity">
    <text evidence="2">Belongs to the universal ribosomal protein uS12 family.</text>
</comment>
<name>RS12_ACTPJ</name>
<proteinExistence type="inferred from homology"/>
<sequence>MATINQLVRKPRVKKVVKSNVPALEACPQKRGVCTRVYTTTPKKPNSALRKVCRIRLTNGFEVTSYIGGEGHNLQEHSVVLIRGGRVKDLPGVRYHTVRGALDCAGVKDRKQGRSKYGVKRPKA</sequence>
<feature type="chain" id="PRO_1000194108" description="Small ribosomal subunit protein uS12">
    <location>
        <begin position="1"/>
        <end position="124"/>
    </location>
</feature>
<feature type="modified residue" description="3-methylthioaspartic acid" evidence="1">
    <location>
        <position position="89"/>
    </location>
</feature>
<dbReference type="EMBL" id="CP000687">
    <property type="protein sequence ID" value="ABY69980.1"/>
    <property type="molecule type" value="Genomic_DNA"/>
</dbReference>
<dbReference type="RefSeq" id="WP_005543325.1">
    <property type="nucleotide sequence ID" value="NC_010278.1"/>
</dbReference>
<dbReference type="SMR" id="B0BQZ5"/>
<dbReference type="GeneID" id="93298548"/>
<dbReference type="KEGG" id="apj:APJL_1426"/>
<dbReference type="HOGENOM" id="CLU_104295_1_2_6"/>
<dbReference type="Proteomes" id="UP000008547">
    <property type="component" value="Chromosome"/>
</dbReference>
<dbReference type="GO" id="GO:0015935">
    <property type="term" value="C:small ribosomal subunit"/>
    <property type="evidence" value="ECO:0007669"/>
    <property type="project" value="InterPro"/>
</dbReference>
<dbReference type="GO" id="GO:0019843">
    <property type="term" value="F:rRNA binding"/>
    <property type="evidence" value="ECO:0007669"/>
    <property type="project" value="UniProtKB-UniRule"/>
</dbReference>
<dbReference type="GO" id="GO:0003735">
    <property type="term" value="F:structural constituent of ribosome"/>
    <property type="evidence" value="ECO:0007669"/>
    <property type="project" value="InterPro"/>
</dbReference>
<dbReference type="GO" id="GO:0000049">
    <property type="term" value="F:tRNA binding"/>
    <property type="evidence" value="ECO:0007669"/>
    <property type="project" value="UniProtKB-UniRule"/>
</dbReference>
<dbReference type="GO" id="GO:0006412">
    <property type="term" value="P:translation"/>
    <property type="evidence" value="ECO:0007669"/>
    <property type="project" value="UniProtKB-UniRule"/>
</dbReference>
<dbReference type="CDD" id="cd03368">
    <property type="entry name" value="Ribosomal_S12"/>
    <property type="match status" value="1"/>
</dbReference>
<dbReference type="FunFam" id="2.40.50.140:FF:000001">
    <property type="entry name" value="30S ribosomal protein S12"/>
    <property type="match status" value="1"/>
</dbReference>
<dbReference type="Gene3D" id="2.40.50.140">
    <property type="entry name" value="Nucleic acid-binding proteins"/>
    <property type="match status" value="1"/>
</dbReference>
<dbReference type="HAMAP" id="MF_00403_B">
    <property type="entry name" value="Ribosomal_uS12_B"/>
    <property type="match status" value="1"/>
</dbReference>
<dbReference type="InterPro" id="IPR012340">
    <property type="entry name" value="NA-bd_OB-fold"/>
</dbReference>
<dbReference type="InterPro" id="IPR006032">
    <property type="entry name" value="Ribosomal_uS12"/>
</dbReference>
<dbReference type="InterPro" id="IPR005679">
    <property type="entry name" value="Ribosomal_uS12_bac"/>
</dbReference>
<dbReference type="NCBIfam" id="TIGR00981">
    <property type="entry name" value="rpsL_bact"/>
    <property type="match status" value="1"/>
</dbReference>
<dbReference type="PANTHER" id="PTHR11652">
    <property type="entry name" value="30S RIBOSOMAL PROTEIN S12 FAMILY MEMBER"/>
    <property type="match status" value="1"/>
</dbReference>
<dbReference type="Pfam" id="PF00164">
    <property type="entry name" value="Ribosom_S12_S23"/>
    <property type="match status" value="1"/>
</dbReference>
<dbReference type="PIRSF" id="PIRSF002133">
    <property type="entry name" value="Ribosomal_S12/S23"/>
    <property type="match status" value="1"/>
</dbReference>
<dbReference type="PRINTS" id="PR01034">
    <property type="entry name" value="RIBOSOMALS12"/>
</dbReference>
<dbReference type="SUPFAM" id="SSF50249">
    <property type="entry name" value="Nucleic acid-binding proteins"/>
    <property type="match status" value="1"/>
</dbReference>
<dbReference type="PROSITE" id="PS00055">
    <property type="entry name" value="RIBOSOMAL_S12"/>
    <property type="match status" value="1"/>
</dbReference>
<reference key="1">
    <citation type="journal article" date="2008" name="PLoS ONE">
        <title>Genome biology of Actinobacillus pleuropneumoniae JL03, an isolate of serotype 3 prevalent in China.</title>
        <authorList>
            <person name="Xu Z."/>
            <person name="Zhou Y."/>
            <person name="Li L."/>
            <person name="Zhou R."/>
            <person name="Xiao S."/>
            <person name="Wan Y."/>
            <person name="Zhang S."/>
            <person name="Wang K."/>
            <person name="Li W."/>
            <person name="Li L."/>
            <person name="Jin H."/>
            <person name="Kang M."/>
            <person name="Dalai B."/>
            <person name="Li T."/>
            <person name="Liu L."/>
            <person name="Cheng Y."/>
            <person name="Zhang L."/>
            <person name="Xu T."/>
            <person name="Zheng H."/>
            <person name="Pu S."/>
            <person name="Wang B."/>
            <person name="Gu W."/>
            <person name="Zhang X.L."/>
            <person name="Zhu G.-F."/>
            <person name="Wang S."/>
            <person name="Zhao G.-P."/>
            <person name="Chen H."/>
        </authorList>
    </citation>
    <scope>NUCLEOTIDE SEQUENCE [LARGE SCALE GENOMIC DNA]</scope>
    <source>
        <strain>JL03</strain>
    </source>
</reference>